<organism>
    <name type="scientific">Porphyra purpurea</name>
    <name type="common">Red seaweed</name>
    <name type="synonym">Ulva purpurea</name>
    <dbReference type="NCBI Taxonomy" id="2787"/>
    <lineage>
        <taxon>Eukaryota</taxon>
        <taxon>Rhodophyta</taxon>
        <taxon>Bangiophyceae</taxon>
        <taxon>Bangiales</taxon>
        <taxon>Bangiaceae</taxon>
        <taxon>Porphyra</taxon>
    </lineage>
</organism>
<gene>
    <name evidence="1" type="primary">ccs1</name>
    <name type="synonym">ycf44</name>
</gene>
<name>CCS1_PORPU</name>
<keyword id="KW-0150">Chloroplast</keyword>
<keyword id="KW-0201">Cytochrome c-type biogenesis</keyword>
<keyword id="KW-0472">Membrane</keyword>
<keyword id="KW-0934">Plastid</keyword>
<keyword id="KW-0793">Thylakoid</keyword>
<keyword id="KW-0812">Transmembrane</keyword>
<keyword id="KW-1133">Transmembrane helix</keyword>
<reference key="1">
    <citation type="journal article" date="1995" name="Plant Mol. Biol. Rep.">
        <title>Complete nucleotide sequence of the Porphyra purpurea chloroplast genome.</title>
        <authorList>
            <person name="Reith M.E."/>
            <person name="Munholland J."/>
        </authorList>
    </citation>
    <scope>NUCLEOTIDE SEQUENCE [LARGE SCALE GENOMIC DNA]</scope>
    <source>
        <strain>Avonport</strain>
    </source>
</reference>
<evidence type="ECO:0000255" key="1">
    <source>
        <dbReference type="HAMAP-Rule" id="MF_01392"/>
    </source>
</evidence>
<geneLocation type="chloroplast"/>
<comment type="function">
    <text evidence="1">Required during biogenesis of c-type cytochromes (cytochrome c6 and cytochrome f) at the step of heme attachment.</text>
</comment>
<comment type="subunit">
    <text evidence="1">May interact with CcsA.</text>
</comment>
<comment type="subcellular location">
    <subcellularLocation>
        <location evidence="1">Plastid</location>
        <location evidence="1">Chloroplast thylakoid membrane</location>
        <topology evidence="1">Multi-pass membrane protein</topology>
    </subcellularLocation>
</comment>
<comment type="similarity">
    <text evidence="1">Belongs to the Ccs1/CcsB family.</text>
</comment>
<protein>
    <recommendedName>
        <fullName evidence="1">Cytochrome c biogenesis protein Ccs1</fullName>
    </recommendedName>
    <alternativeName>
        <fullName>ORF437</fullName>
    </alternativeName>
</protein>
<sequence length="437" mass="50195">MQINLKFKKKDVRWYLLRLFSNLQFSIILLLVIASFSVIGTIIEQNKDLDFYQAHYSVSGEHFIILNWKNIELFGLNHVYTTWWFLTLLFIFSLSLLVCSLSRQIPSLQNARRWCFYKNPNQFKKFTGSQEIQKTTLHLVASCLQKFNYHIFQQGNSIYCYKGLLGRLAPIFVHASIILLLIGSVLGLVSGFSAQEMVPSGELFRLQNIIASGQFSYIPQDFSARVNNFIIEYNQDNSISQFFSDISILDTEGTELKHSTIHVNSPLQFKGLTIYQTDWDIIAIRIKINNTDTLQIPLKKVVLPNNKIWVGLIAQDQDNQLALVLQDLQKQATLYNKSGEKIMSVTIGEKYFIDNNIIAFLSIVPSTGLQIKSDPGIPIVYTSFFFLITSVSVSYISYSQIWIIEKKHRFYIGGVTNRAQLTFEEELLKISNRSSKI</sequence>
<dbReference type="EMBL" id="U38804">
    <property type="protein sequence ID" value="AAC08249.1"/>
    <property type="molecule type" value="Genomic_DNA"/>
</dbReference>
<dbReference type="PIR" id="S73284">
    <property type="entry name" value="S73284"/>
</dbReference>
<dbReference type="RefSeq" id="NP_053973.1">
    <property type="nucleotide sequence ID" value="NC_000925.1"/>
</dbReference>
<dbReference type="GeneID" id="810002"/>
<dbReference type="GO" id="GO:0009535">
    <property type="term" value="C:chloroplast thylakoid membrane"/>
    <property type="evidence" value="ECO:0007669"/>
    <property type="project" value="UniProtKB-SubCell"/>
</dbReference>
<dbReference type="GO" id="GO:0017004">
    <property type="term" value="P:cytochrome complex assembly"/>
    <property type="evidence" value="ECO:0007669"/>
    <property type="project" value="UniProtKB-UniRule"/>
</dbReference>
<dbReference type="HAMAP" id="MF_01392">
    <property type="entry name" value="CytC_Ccs1"/>
    <property type="match status" value="1"/>
</dbReference>
<dbReference type="InterPro" id="IPR023494">
    <property type="entry name" value="Cyt_c_bgen_Ccs1/CcsB/ResB"/>
</dbReference>
<dbReference type="InterPro" id="IPR007816">
    <property type="entry name" value="ResB-like_domain"/>
</dbReference>
<dbReference type="PANTHER" id="PTHR31566">
    <property type="entry name" value="CYTOCHROME C BIOGENESIS PROTEIN CCS1, CHLOROPLASTIC"/>
    <property type="match status" value="1"/>
</dbReference>
<dbReference type="PANTHER" id="PTHR31566:SF0">
    <property type="entry name" value="CYTOCHROME C BIOGENESIS PROTEIN CCS1, CHLOROPLASTIC"/>
    <property type="match status" value="1"/>
</dbReference>
<dbReference type="Pfam" id="PF05140">
    <property type="entry name" value="ResB"/>
    <property type="match status" value="2"/>
</dbReference>
<feature type="chain" id="PRO_0000217364" description="Cytochrome c biogenesis protein Ccs1">
    <location>
        <begin position="1"/>
        <end position="437"/>
    </location>
</feature>
<feature type="transmembrane region" description="Helical" evidence="1">
    <location>
        <begin position="23"/>
        <end position="43"/>
    </location>
</feature>
<feature type="transmembrane region" description="Helical" evidence="1">
    <location>
        <begin position="82"/>
        <end position="102"/>
    </location>
</feature>
<feature type="transmembrane region" description="Helical" evidence="1">
    <location>
        <begin position="168"/>
        <end position="188"/>
    </location>
</feature>
<accession>P51363</accession>
<proteinExistence type="inferred from homology"/>